<dbReference type="EC" id="7.1.1.-" evidence="1"/>
<dbReference type="EMBL" id="CP000608">
    <property type="protein sequence ID" value="ABO46102.1"/>
    <property type="molecule type" value="Genomic_DNA"/>
</dbReference>
<dbReference type="RefSeq" id="WP_003017376.1">
    <property type="nucleotide sequence ID" value="NC_009257.1"/>
</dbReference>
<dbReference type="SMR" id="A4IW00"/>
<dbReference type="KEGG" id="ftw:FTW_0114"/>
<dbReference type="HOGENOM" id="CLU_067218_5_1_6"/>
<dbReference type="GO" id="GO:0005886">
    <property type="term" value="C:plasma membrane"/>
    <property type="evidence" value="ECO:0007669"/>
    <property type="project" value="UniProtKB-SubCell"/>
</dbReference>
<dbReference type="GO" id="GO:0051539">
    <property type="term" value="F:4 iron, 4 sulfur cluster binding"/>
    <property type="evidence" value="ECO:0007669"/>
    <property type="project" value="UniProtKB-KW"/>
</dbReference>
<dbReference type="GO" id="GO:0005506">
    <property type="term" value="F:iron ion binding"/>
    <property type="evidence" value="ECO:0007669"/>
    <property type="project" value="UniProtKB-UniRule"/>
</dbReference>
<dbReference type="GO" id="GO:0050136">
    <property type="term" value="F:NADH:ubiquinone reductase (non-electrogenic) activity"/>
    <property type="evidence" value="ECO:0007669"/>
    <property type="project" value="UniProtKB-UniRule"/>
</dbReference>
<dbReference type="GO" id="GO:0048038">
    <property type="term" value="F:quinone binding"/>
    <property type="evidence" value="ECO:0007669"/>
    <property type="project" value="UniProtKB-KW"/>
</dbReference>
<dbReference type="GO" id="GO:0009060">
    <property type="term" value="P:aerobic respiration"/>
    <property type="evidence" value="ECO:0007669"/>
    <property type="project" value="TreeGrafter"/>
</dbReference>
<dbReference type="FunFam" id="3.30.70.3270:FF:000003">
    <property type="entry name" value="NADH-quinone oxidoreductase subunit I"/>
    <property type="match status" value="1"/>
</dbReference>
<dbReference type="Gene3D" id="3.30.70.3270">
    <property type="match status" value="1"/>
</dbReference>
<dbReference type="HAMAP" id="MF_01351">
    <property type="entry name" value="NDH1_NuoI"/>
    <property type="match status" value="1"/>
</dbReference>
<dbReference type="InterPro" id="IPR017896">
    <property type="entry name" value="4Fe4S_Fe-S-bd"/>
</dbReference>
<dbReference type="InterPro" id="IPR017900">
    <property type="entry name" value="4Fe4S_Fe_S_CS"/>
</dbReference>
<dbReference type="InterPro" id="IPR010226">
    <property type="entry name" value="NADH_quinone_OxRdtase_chainI"/>
</dbReference>
<dbReference type="NCBIfam" id="TIGR01971">
    <property type="entry name" value="NuoI"/>
    <property type="match status" value="1"/>
</dbReference>
<dbReference type="NCBIfam" id="NF004538">
    <property type="entry name" value="PRK05888.1-4"/>
    <property type="match status" value="1"/>
</dbReference>
<dbReference type="PANTHER" id="PTHR10849:SF20">
    <property type="entry name" value="NADH DEHYDROGENASE [UBIQUINONE] IRON-SULFUR PROTEIN 8, MITOCHONDRIAL"/>
    <property type="match status" value="1"/>
</dbReference>
<dbReference type="PANTHER" id="PTHR10849">
    <property type="entry name" value="NADH DEHYDROGENASE UBIQUINONE IRON-SULFUR PROTEIN 8, MITOCHONDRIAL"/>
    <property type="match status" value="1"/>
</dbReference>
<dbReference type="Pfam" id="PF12838">
    <property type="entry name" value="Fer4_7"/>
    <property type="match status" value="1"/>
</dbReference>
<dbReference type="SUPFAM" id="SSF54862">
    <property type="entry name" value="4Fe-4S ferredoxins"/>
    <property type="match status" value="1"/>
</dbReference>
<dbReference type="PROSITE" id="PS00198">
    <property type="entry name" value="4FE4S_FER_1"/>
    <property type="match status" value="2"/>
</dbReference>
<dbReference type="PROSITE" id="PS51379">
    <property type="entry name" value="4FE4S_FER_2"/>
    <property type="match status" value="2"/>
</dbReference>
<feature type="chain" id="PRO_0000298498" description="NADH-quinone oxidoreductase subunit I">
    <location>
        <begin position="1"/>
        <end position="162"/>
    </location>
</feature>
<feature type="domain" description="4Fe-4S ferredoxin-type 1" evidence="1">
    <location>
        <begin position="54"/>
        <end position="83"/>
    </location>
</feature>
<feature type="domain" description="4Fe-4S ferredoxin-type 2" evidence="1">
    <location>
        <begin position="93"/>
        <end position="122"/>
    </location>
</feature>
<feature type="binding site" evidence="1">
    <location>
        <position position="63"/>
    </location>
    <ligand>
        <name>[4Fe-4S] cluster</name>
        <dbReference type="ChEBI" id="CHEBI:49883"/>
        <label>1</label>
    </ligand>
</feature>
<feature type="binding site" evidence="1">
    <location>
        <position position="66"/>
    </location>
    <ligand>
        <name>[4Fe-4S] cluster</name>
        <dbReference type="ChEBI" id="CHEBI:49883"/>
        <label>1</label>
    </ligand>
</feature>
<feature type="binding site" evidence="1">
    <location>
        <position position="69"/>
    </location>
    <ligand>
        <name>[4Fe-4S] cluster</name>
        <dbReference type="ChEBI" id="CHEBI:49883"/>
        <label>1</label>
    </ligand>
</feature>
<feature type="binding site" evidence="1">
    <location>
        <position position="73"/>
    </location>
    <ligand>
        <name>[4Fe-4S] cluster</name>
        <dbReference type="ChEBI" id="CHEBI:49883"/>
        <label>2</label>
    </ligand>
</feature>
<feature type="binding site" evidence="1">
    <location>
        <position position="102"/>
    </location>
    <ligand>
        <name>[4Fe-4S] cluster</name>
        <dbReference type="ChEBI" id="CHEBI:49883"/>
        <label>2</label>
    </ligand>
</feature>
<feature type="binding site" evidence="1">
    <location>
        <position position="105"/>
    </location>
    <ligand>
        <name>[4Fe-4S] cluster</name>
        <dbReference type="ChEBI" id="CHEBI:49883"/>
        <label>2</label>
    </ligand>
</feature>
<feature type="binding site" evidence="1">
    <location>
        <position position="108"/>
    </location>
    <ligand>
        <name>[4Fe-4S] cluster</name>
        <dbReference type="ChEBI" id="CHEBI:49883"/>
        <label>2</label>
    </ligand>
</feature>
<feature type="binding site" evidence="1">
    <location>
        <position position="112"/>
    </location>
    <ligand>
        <name>[4Fe-4S] cluster</name>
        <dbReference type="ChEBI" id="CHEBI:49883"/>
        <label>1</label>
    </ligand>
</feature>
<sequence length="162" mass="18862">MRNITNFLKTFLLWELLKGLKVTGKHFFTRKVTVQYPDEKTPISNRFRGLHALRRYENGEERCIACKLCEVVCPALAITINSTEREDGTRRTSSYEMDLFKCIFCGYCEESCPVDSIVETNILEYHFEERGENIMTKAKLLAIGDKYEAQIAADRLQDKDFR</sequence>
<gene>
    <name evidence="1" type="primary">nuoI</name>
    <name type="ordered locus">FTW_0114</name>
</gene>
<keyword id="KW-0004">4Fe-4S</keyword>
<keyword id="KW-0997">Cell inner membrane</keyword>
<keyword id="KW-1003">Cell membrane</keyword>
<keyword id="KW-0408">Iron</keyword>
<keyword id="KW-0411">Iron-sulfur</keyword>
<keyword id="KW-0472">Membrane</keyword>
<keyword id="KW-0479">Metal-binding</keyword>
<keyword id="KW-0520">NAD</keyword>
<keyword id="KW-0874">Quinone</keyword>
<keyword id="KW-0677">Repeat</keyword>
<keyword id="KW-1278">Translocase</keyword>
<keyword id="KW-0830">Ubiquinone</keyword>
<protein>
    <recommendedName>
        <fullName evidence="1">NADH-quinone oxidoreductase subunit I</fullName>
        <ecNumber evidence="1">7.1.1.-</ecNumber>
    </recommendedName>
    <alternativeName>
        <fullName evidence="1">NADH dehydrogenase I subunit I</fullName>
    </alternativeName>
    <alternativeName>
        <fullName evidence="1">NDH-1 subunit I</fullName>
    </alternativeName>
</protein>
<organism>
    <name type="scientific">Francisella tularensis subsp. tularensis (strain WY96-3418)</name>
    <dbReference type="NCBI Taxonomy" id="418136"/>
    <lineage>
        <taxon>Bacteria</taxon>
        <taxon>Pseudomonadati</taxon>
        <taxon>Pseudomonadota</taxon>
        <taxon>Gammaproteobacteria</taxon>
        <taxon>Thiotrichales</taxon>
        <taxon>Francisellaceae</taxon>
        <taxon>Francisella</taxon>
    </lineage>
</organism>
<reference key="1">
    <citation type="journal article" date="2007" name="PLoS ONE">
        <title>Complete genomic characterization of a pathogenic A.II strain of Francisella tularensis subspecies tularensis.</title>
        <authorList>
            <person name="Beckstrom-Sternberg S.M."/>
            <person name="Auerbach R.K."/>
            <person name="Godbole S."/>
            <person name="Pearson J.V."/>
            <person name="Beckstrom-Sternberg J.S."/>
            <person name="Deng Z."/>
            <person name="Munk C."/>
            <person name="Kubota K."/>
            <person name="Zhou Y."/>
            <person name="Bruce D."/>
            <person name="Noronha J."/>
            <person name="Scheuermann R.H."/>
            <person name="Wang A."/>
            <person name="Wei X."/>
            <person name="Wang J."/>
            <person name="Hao J."/>
            <person name="Wagner D.M."/>
            <person name="Brettin T.S."/>
            <person name="Brown N."/>
            <person name="Gilna P."/>
            <person name="Keim P.S."/>
        </authorList>
    </citation>
    <scope>NUCLEOTIDE SEQUENCE [LARGE SCALE GENOMIC DNA]</scope>
    <source>
        <strain>WY96-3418</strain>
    </source>
</reference>
<evidence type="ECO:0000255" key="1">
    <source>
        <dbReference type="HAMAP-Rule" id="MF_01351"/>
    </source>
</evidence>
<proteinExistence type="inferred from homology"/>
<accession>A4IW00</accession>
<comment type="function">
    <text evidence="1">NDH-1 shuttles electrons from NADH, via FMN and iron-sulfur (Fe-S) centers, to quinones in the respiratory chain. The immediate electron acceptor for the enzyme in this species is believed to be ubiquinone. Couples the redox reaction to proton translocation (for every two electrons transferred, four hydrogen ions are translocated across the cytoplasmic membrane), and thus conserves the redox energy in a proton gradient.</text>
</comment>
<comment type="catalytic activity">
    <reaction evidence="1">
        <text>a quinone + NADH + 5 H(+)(in) = a quinol + NAD(+) + 4 H(+)(out)</text>
        <dbReference type="Rhea" id="RHEA:57888"/>
        <dbReference type="ChEBI" id="CHEBI:15378"/>
        <dbReference type="ChEBI" id="CHEBI:24646"/>
        <dbReference type="ChEBI" id="CHEBI:57540"/>
        <dbReference type="ChEBI" id="CHEBI:57945"/>
        <dbReference type="ChEBI" id="CHEBI:132124"/>
    </reaction>
</comment>
<comment type="cofactor">
    <cofactor evidence="1">
        <name>[4Fe-4S] cluster</name>
        <dbReference type="ChEBI" id="CHEBI:49883"/>
    </cofactor>
    <text evidence="1">Binds 2 [4Fe-4S] clusters per subunit.</text>
</comment>
<comment type="subunit">
    <text evidence="1">NDH-1 is composed of 14 different subunits. Subunits NuoA, H, J, K, L, M, N constitute the membrane sector of the complex.</text>
</comment>
<comment type="subcellular location">
    <subcellularLocation>
        <location evidence="1">Cell inner membrane</location>
        <topology evidence="1">Peripheral membrane protein</topology>
    </subcellularLocation>
</comment>
<comment type="similarity">
    <text evidence="1">Belongs to the complex I 23 kDa subunit family.</text>
</comment>
<name>NUOI_FRATW</name>